<keyword id="KW-0687">Ribonucleoprotein</keyword>
<keyword id="KW-0689">Ribosomal protein</keyword>
<keyword id="KW-0694">RNA-binding</keyword>
<keyword id="KW-0699">rRNA-binding</keyword>
<reference key="1">
    <citation type="journal article" date="2010" name="Genome Biol.">
        <title>Structure and dynamics of the pan-genome of Streptococcus pneumoniae and closely related species.</title>
        <authorList>
            <person name="Donati C."/>
            <person name="Hiller N.L."/>
            <person name="Tettelin H."/>
            <person name="Muzzi A."/>
            <person name="Croucher N.J."/>
            <person name="Angiuoli S.V."/>
            <person name="Oggioni M."/>
            <person name="Dunning Hotopp J.C."/>
            <person name="Hu F.Z."/>
            <person name="Riley D.R."/>
            <person name="Covacci A."/>
            <person name="Mitchell T.J."/>
            <person name="Bentley S.D."/>
            <person name="Kilian M."/>
            <person name="Ehrlich G.D."/>
            <person name="Rappuoli R."/>
            <person name="Moxon E.R."/>
            <person name="Masignani V."/>
        </authorList>
    </citation>
    <scope>NUCLEOTIDE SEQUENCE [LARGE SCALE GENOMIC DNA]</scope>
    <source>
        <strain>70585</strain>
    </source>
</reference>
<name>RS15_STRP7</name>
<evidence type="ECO:0000255" key="1">
    <source>
        <dbReference type="HAMAP-Rule" id="MF_01343"/>
    </source>
</evidence>
<evidence type="ECO:0000305" key="2"/>
<organism>
    <name type="scientific">Streptococcus pneumoniae (strain 70585)</name>
    <dbReference type="NCBI Taxonomy" id="488221"/>
    <lineage>
        <taxon>Bacteria</taxon>
        <taxon>Bacillati</taxon>
        <taxon>Bacillota</taxon>
        <taxon>Bacilli</taxon>
        <taxon>Lactobacillales</taxon>
        <taxon>Streptococcaceae</taxon>
        <taxon>Streptococcus</taxon>
    </lineage>
</organism>
<sequence length="89" mass="10535">MAISKEKKNEIIAQYARHEGDTGSVEVQVAVLTWEINHLNEHIKQHKKDHATYRGLMKKIGRRRNLLAYLRKNDVNRYRELINSLGLRR</sequence>
<accession>C1C8L6</accession>
<comment type="function">
    <text evidence="1">One of the primary rRNA binding proteins, it binds directly to 16S rRNA where it helps nucleate assembly of the platform of the 30S subunit by binding and bridging several RNA helices of the 16S rRNA.</text>
</comment>
<comment type="function">
    <text evidence="1">Forms an intersubunit bridge (bridge B4) with the 23S rRNA of the 50S subunit in the ribosome.</text>
</comment>
<comment type="subunit">
    <text evidence="1">Part of the 30S ribosomal subunit. Forms a bridge to the 50S subunit in the 70S ribosome, contacting the 23S rRNA.</text>
</comment>
<comment type="similarity">
    <text evidence="1">Belongs to the universal ribosomal protein uS15 family.</text>
</comment>
<protein>
    <recommendedName>
        <fullName evidence="1">Small ribosomal subunit protein uS15</fullName>
    </recommendedName>
    <alternativeName>
        <fullName evidence="2">30S ribosomal protein S15</fullName>
    </alternativeName>
</protein>
<gene>
    <name evidence="1" type="primary">rpsO</name>
    <name type="ordered locus">SP70585_1667</name>
</gene>
<proteinExistence type="inferred from homology"/>
<dbReference type="EMBL" id="CP000918">
    <property type="protein sequence ID" value="ACO17407.1"/>
    <property type="molecule type" value="Genomic_DNA"/>
</dbReference>
<dbReference type="RefSeq" id="WP_001018251.1">
    <property type="nucleotide sequence ID" value="NC_012468.1"/>
</dbReference>
<dbReference type="SMR" id="C1C8L6"/>
<dbReference type="GeneID" id="93847676"/>
<dbReference type="KEGG" id="snm:SP70585_1667"/>
<dbReference type="HOGENOM" id="CLU_148518_0_0_9"/>
<dbReference type="Proteomes" id="UP000002211">
    <property type="component" value="Chromosome"/>
</dbReference>
<dbReference type="GO" id="GO:0022627">
    <property type="term" value="C:cytosolic small ribosomal subunit"/>
    <property type="evidence" value="ECO:0007669"/>
    <property type="project" value="TreeGrafter"/>
</dbReference>
<dbReference type="GO" id="GO:0019843">
    <property type="term" value="F:rRNA binding"/>
    <property type="evidence" value="ECO:0007669"/>
    <property type="project" value="UniProtKB-UniRule"/>
</dbReference>
<dbReference type="GO" id="GO:0003735">
    <property type="term" value="F:structural constituent of ribosome"/>
    <property type="evidence" value="ECO:0007669"/>
    <property type="project" value="InterPro"/>
</dbReference>
<dbReference type="GO" id="GO:0006412">
    <property type="term" value="P:translation"/>
    <property type="evidence" value="ECO:0007669"/>
    <property type="project" value="UniProtKB-UniRule"/>
</dbReference>
<dbReference type="CDD" id="cd00353">
    <property type="entry name" value="Ribosomal_S15p_S13e"/>
    <property type="match status" value="1"/>
</dbReference>
<dbReference type="FunFam" id="1.10.287.10:FF:000002">
    <property type="entry name" value="30S ribosomal protein S15"/>
    <property type="match status" value="1"/>
</dbReference>
<dbReference type="Gene3D" id="6.10.250.3130">
    <property type="match status" value="1"/>
</dbReference>
<dbReference type="Gene3D" id="1.10.287.10">
    <property type="entry name" value="S15/NS1, RNA-binding"/>
    <property type="match status" value="1"/>
</dbReference>
<dbReference type="HAMAP" id="MF_01343_B">
    <property type="entry name" value="Ribosomal_uS15_B"/>
    <property type="match status" value="1"/>
</dbReference>
<dbReference type="InterPro" id="IPR000589">
    <property type="entry name" value="Ribosomal_uS15"/>
</dbReference>
<dbReference type="InterPro" id="IPR005290">
    <property type="entry name" value="Ribosomal_uS15_bac-type"/>
</dbReference>
<dbReference type="InterPro" id="IPR009068">
    <property type="entry name" value="uS15_NS1_RNA-bd_sf"/>
</dbReference>
<dbReference type="NCBIfam" id="TIGR00952">
    <property type="entry name" value="S15_bact"/>
    <property type="match status" value="1"/>
</dbReference>
<dbReference type="PANTHER" id="PTHR23321">
    <property type="entry name" value="RIBOSOMAL PROTEIN S15, BACTERIAL AND ORGANELLAR"/>
    <property type="match status" value="1"/>
</dbReference>
<dbReference type="PANTHER" id="PTHR23321:SF26">
    <property type="entry name" value="SMALL RIBOSOMAL SUBUNIT PROTEIN US15M"/>
    <property type="match status" value="1"/>
</dbReference>
<dbReference type="Pfam" id="PF00312">
    <property type="entry name" value="Ribosomal_S15"/>
    <property type="match status" value="1"/>
</dbReference>
<dbReference type="SMART" id="SM01387">
    <property type="entry name" value="Ribosomal_S15"/>
    <property type="match status" value="1"/>
</dbReference>
<dbReference type="SUPFAM" id="SSF47060">
    <property type="entry name" value="S15/NS1 RNA-binding domain"/>
    <property type="match status" value="1"/>
</dbReference>
<dbReference type="PROSITE" id="PS00362">
    <property type="entry name" value="RIBOSOMAL_S15"/>
    <property type="match status" value="1"/>
</dbReference>
<feature type="chain" id="PRO_1000166439" description="Small ribosomal subunit protein uS15">
    <location>
        <begin position="1"/>
        <end position="89"/>
    </location>
</feature>